<dbReference type="EMBL" id="CP001144">
    <property type="protein sequence ID" value="ACH74129.1"/>
    <property type="molecule type" value="Genomic_DNA"/>
</dbReference>
<dbReference type="RefSeq" id="WP_001288828.1">
    <property type="nucleotide sequence ID" value="NC_011205.1"/>
</dbReference>
<dbReference type="SMR" id="B5FQ65"/>
<dbReference type="KEGG" id="sed:SeD_A1057"/>
<dbReference type="HOGENOM" id="CLU_049853_0_0_6"/>
<dbReference type="Proteomes" id="UP000008322">
    <property type="component" value="Chromosome"/>
</dbReference>
<dbReference type="GO" id="GO:0005737">
    <property type="term" value="C:cytoplasm"/>
    <property type="evidence" value="ECO:0007669"/>
    <property type="project" value="UniProtKB-UniRule"/>
</dbReference>
<dbReference type="GO" id="GO:0009295">
    <property type="term" value="C:nucleoid"/>
    <property type="evidence" value="ECO:0007669"/>
    <property type="project" value="UniProtKB-SubCell"/>
</dbReference>
<dbReference type="GO" id="GO:0005509">
    <property type="term" value="F:calcium ion binding"/>
    <property type="evidence" value="ECO:0007669"/>
    <property type="project" value="UniProtKB-UniRule"/>
</dbReference>
<dbReference type="GO" id="GO:0051301">
    <property type="term" value="P:cell division"/>
    <property type="evidence" value="ECO:0007669"/>
    <property type="project" value="UniProtKB-KW"/>
</dbReference>
<dbReference type="GO" id="GO:0030261">
    <property type="term" value="P:chromosome condensation"/>
    <property type="evidence" value="ECO:0007669"/>
    <property type="project" value="UniProtKB-KW"/>
</dbReference>
<dbReference type="GO" id="GO:0007059">
    <property type="term" value="P:chromosome segregation"/>
    <property type="evidence" value="ECO:0007669"/>
    <property type="project" value="UniProtKB-UniRule"/>
</dbReference>
<dbReference type="GO" id="GO:0006260">
    <property type="term" value="P:DNA replication"/>
    <property type="evidence" value="ECO:0007669"/>
    <property type="project" value="UniProtKB-UniRule"/>
</dbReference>
<dbReference type="CDD" id="cd16337">
    <property type="entry name" value="MukF_C"/>
    <property type="match status" value="1"/>
</dbReference>
<dbReference type="CDD" id="cd16335">
    <property type="entry name" value="MukF_N"/>
    <property type="match status" value="1"/>
</dbReference>
<dbReference type="Gene3D" id="1.20.58.590">
    <property type="entry name" value="Chromosome partition protein MukF, middle domain"/>
    <property type="match status" value="1"/>
</dbReference>
<dbReference type="Gene3D" id="1.10.225.40">
    <property type="entry name" value="MukF, C-terminal domain"/>
    <property type="match status" value="1"/>
</dbReference>
<dbReference type="Gene3D" id="1.10.10.10">
    <property type="entry name" value="Winged helix-like DNA-binding domain superfamily/Winged helix DNA-binding domain"/>
    <property type="match status" value="1"/>
</dbReference>
<dbReference type="HAMAP" id="MF_01803">
    <property type="entry name" value="MukF"/>
    <property type="match status" value="1"/>
</dbReference>
<dbReference type="InterPro" id="IPR005582">
    <property type="entry name" value="Chromosome_partition_MukF"/>
</dbReference>
<dbReference type="InterPro" id="IPR033441">
    <property type="entry name" value="MukF_C"/>
</dbReference>
<dbReference type="InterPro" id="IPR038198">
    <property type="entry name" value="MukF_C_sf"/>
</dbReference>
<dbReference type="InterPro" id="IPR033440">
    <property type="entry name" value="MukF_M"/>
</dbReference>
<dbReference type="InterPro" id="IPR036141">
    <property type="entry name" value="MukF_M_sp"/>
</dbReference>
<dbReference type="InterPro" id="IPR033439">
    <property type="entry name" value="MukF_WHTH"/>
</dbReference>
<dbReference type="InterPro" id="IPR036388">
    <property type="entry name" value="WH-like_DNA-bd_sf"/>
</dbReference>
<dbReference type="InterPro" id="IPR036390">
    <property type="entry name" value="WH_DNA-bd_sf"/>
</dbReference>
<dbReference type="NCBIfam" id="NF003615">
    <property type="entry name" value="PRK05260.1"/>
    <property type="match status" value="1"/>
</dbReference>
<dbReference type="Pfam" id="PF03882">
    <property type="entry name" value="KicB"/>
    <property type="match status" value="1"/>
</dbReference>
<dbReference type="Pfam" id="PF17193">
    <property type="entry name" value="MukF_C"/>
    <property type="match status" value="1"/>
</dbReference>
<dbReference type="Pfam" id="PF17192">
    <property type="entry name" value="MukF_M"/>
    <property type="match status" value="1"/>
</dbReference>
<dbReference type="PIRSF" id="PIRSF018282">
    <property type="entry name" value="MukF"/>
    <property type="match status" value="1"/>
</dbReference>
<dbReference type="SUPFAM" id="SSF140570">
    <property type="entry name" value="MukF C-terminal domain-like"/>
    <property type="match status" value="1"/>
</dbReference>
<dbReference type="SUPFAM" id="SSF46785">
    <property type="entry name" value="Winged helix' DNA-binding domain"/>
    <property type="match status" value="1"/>
</dbReference>
<evidence type="ECO:0000255" key="1">
    <source>
        <dbReference type="HAMAP-Rule" id="MF_01803"/>
    </source>
</evidence>
<organism>
    <name type="scientific">Salmonella dublin (strain CT_02021853)</name>
    <dbReference type="NCBI Taxonomy" id="439851"/>
    <lineage>
        <taxon>Bacteria</taxon>
        <taxon>Pseudomonadati</taxon>
        <taxon>Pseudomonadota</taxon>
        <taxon>Gammaproteobacteria</taxon>
        <taxon>Enterobacterales</taxon>
        <taxon>Enterobacteriaceae</taxon>
        <taxon>Salmonella</taxon>
    </lineage>
</organism>
<name>MUKF_SALDC</name>
<proteinExistence type="inferred from homology"/>
<reference key="1">
    <citation type="journal article" date="2011" name="J. Bacteriol.">
        <title>Comparative genomics of 28 Salmonella enterica isolates: evidence for CRISPR-mediated adaptive sublineage evolution.</title>
        <authorList>
            <person name="Fricke W.F."/>
            <person name="Mammel M.K."/>
            <person name="McDermott P.F."/>
            <person name="Tartera C."/>
            <person name="White D.G."/>
            <person name="Leclerc J.E."/>
            <person name="Ravel J."/>
            <person name="Cebula T.A."/>
        </authorList>
    </citation>
    <scope>NUCLEOTIDE SEQUENCE [LARGE SCALE GENOMIC DNA]</scope>
    <source>
        <strain>CT_02021853</strain>
    </source>
</reference>
<keyword id="KW-0106">Calcium</keyword>
<keyword id="KW-0131">Cell cycle</keyword>
<keyword id="KW-0132">Cell division</keyword>
<keyword id="KW-0159">Chromosome partition</keyword>
<keyword id="KW-0963">Cytoplasm</keyword>
<keyword id="KW-0226">DNA condensation</keyword>
<feature type="chain" id="PRO_1000187513" description="Chromosome partition protein MukF">
    <location>
        <begin position="1"/>
        <end position="440"/>
    </location>
</feature>
<feature type="region of interest" description="Leucine-zipper">
    <location>
        <begin position="208"/>
        <end position="236"/>
    </location>
</feature>
<accession>B5FQ65</accession>
<gene>
    <name evidence="1" type="primary">mukF</name>
    <name type="ordered locus">SeD_A1057</name>
</gene>
<protein>
    <recommendedName>
        <fullName evidence="1">Chromosome partition protein MukF</fullName>
    </recommendedName>
</protein>
<sequence>MSEFSQTVPELVAWARKNDFSISLPVDRLSFLLAVATLNGERLDGEMSEGELVDAFRHVSDAFEQTSETIGVRANNAINDMVRQRLLNRFTSEQAEGNAIYRLTPLGIGITDYYIRQREFSTLRLSMQLSIVAGELKRAADAAAEGGDEFHWHRNVYAPLKYSVAEIFDSIDLTQRIMDEQQQQVKDDIAQLLNKDWRAAISSCELLLSETSGTLRELQDTLEAAGDKLQANLLRIQDATMTHDDLHFVDRLVFDLQSKLDRIISWGQQSIDLWIGYDRHVHKFIRTAIDMDKNRVFAQRLRQSVQTYFDDPWALTYANADRLLDMRDEEMALRDDEVTGELPPDLEYEEFNEIREQLAAIIEEQLAIYKTRQTPLDLGLVVREYLAQYPRARHFDVARIVIDQAVRLGVAQADFTGLPAKWQPINDYGAKVQAHVIDKY</sequence>
<comment type="function">
    <text evidence="1">Involved in chromosome condensation, segregation and cell cycle progression. May participate in facilitating chromosome segregation by condensation DNA from both sides of a centrally located replisome during cell division. Not required for mini-F plasmid partitioning. Probably acts via its interaction with MukB and MukE. Overexpression results in anucleate cells. It has a calcium binding activity.</text>
</comment>
<comment type="subunit">
    <text evidence="1">Interacts, and probably forms a ternary complex, with MukE and MukB via its C-terminal region. The complex formation is stimulated by calcium or magnesium. It is required for an interaction between MukE and MukB.</text>
</comment>
<comment type="subcellular location">
    <subcellularLocation>
        <location evidence="1">Cytoplasm</location>
        <location evidence="1">Nucleoid</location>
    </subcellularLocation>
    <text evidence="1">Restricted to the nucleoid region.</text>
</comment>
<comment type="similarity">
    <text evidence="1">Belongs to the MukF family.</text>
</comment>